<proteinExistence type="evidence at transcript level"/>
<dbReference type="EMBL" id="BC114765">
    <property type="protein sequence ID" value="AAI14766.1"/>
    <property type="molecule type" value="mRNA"/>
</dbReference>
<dbReference type="RefSeq" id="NP_001068681.1">
    <property type="nucleotide sequence ID" value="NM_001075213.1"/>
</dbReference>
<dbReference type="RefSeq" id="XP_005204038.1">
    <property type="nucleotide sequence ID" value="XM_005203981.3"/>
</dbReference>
<dbReference type="RefSeq" id="XP_005204040.1">
    <property type="nucleotide sequence ID" value="XM_005203983.5"/>
</dbReference>
<dbReference type="RefSeq" id="XP_024841815.1">
    <property type="nucleotide sequence ID" value="XM_024986047.2"/>
</dbReference>
<dbReference type="FunCoup" id="Q1RMR0">
    <property type="interactions" value="1482"/>
</dbReference>
<dbReference type="STRING" id="9913.ENSBTAP00000018472"/>
<dbReference type="PaxDb" id="9913-ENSBTAP00000018472"/>
<dbReference type="Ensembl" id="ENSBTAT00000118161.1">
    <property type="protein sequence ID" value="ENSBTAP00000076742.1"/>
    <property type="gene ID" value="ENSBTAG00000013910.7"/>
</dbReference>
<dbReference type="GeneID" id="505641"/>
<dbReference type="KEGG" id="bta:505641"/>
<dbReference type="CTD" id="84265"/>
<dbReference type="VEuPathDB" id="HostDB:ENSBTAG00000013910"/>
<dbReference type="VGNC" id="VGNC:84440">
    <property type="gene designation" value="POLR3GL"/>
</dbReference>
<dbReference type="eggNOG" id="ENOG502QUPX">
    <property type="taxonomic scope" value="Eukaryota"/>
</dbReference>
<dbReference type="GeneTree" id="ENSGT01110000267397"/>
<dbReference type="HOGENOM" id="CLU_084309_0_0_1"/>
<dbReference type="InParanoid" id="Q1RMR0"/>
<dbReference type="OMA" id="KDLHAPF"/>
<dbReference type="OrthoDB" id="5377312at2759"/>
<dbReference type="TreeFam" id="TF103052"/>
<dbReference type="Reactome" id="R-BTA-76061">
    <property type="pathway name" value="RNA Polymerase III Transcription Initiation From Type 1 Promoter"/>
</dbReference>
<dbReference type="Reactome" id="R-BTA-76066">
    <property type="pathway name" value="RNA Polymerase III Transcription Initiation From Type 2 Promoter"/>
</dbReference>
<dbReference type="Reactome" id="R-BTA-76071">
    <property type="pathway name" value="RNA Polymerase III Transcription Initiation From Type 3 Promoter"/>
</dbReference>
<dbReference type="Proteomes" id="UP000009136">
    <property type="component" value="Chromosome 3"/>
</dbReference>
<dbReference type="Bgee" id="ENSBTAG00000013910">
    <property type="expression patterns" value="Expressed in omental fat pad and 100 other cell types or tissues"/>
</dbReference>
<dbReference type="GO" id="GO:0005634">
    <property type="term" value="C:nucleus"/>
    <property type="evidence" value="ECO:0000250"/>
    <property type="project" value="UniProtKB"/>
</dbReference>
<dbReference type="GO" id="GO:0005666">
    <property type="term" value="C:RNA polymerase III complex"/>
    <property type="evidence" value="ECO:0000318"/>
    <property type="project" value="GO_Central"/>
</dbReference>
<dbReference type="GO" id="GO:0006383">
    <property type="term" value="P:transcription by RNA polymerase III"/>
    <property type="evidence" value="ECO:0000250"/>
    <property type="project" value="UniProtKB"/>
</dbReference>
<dbReference type="InterPro" id="IPR024661">
    <property type="entry name" value="RNA_pol_III_Rpc31"/>
</dbReference>
<dbReference type="PANTHER" id="PTHR15367">
    <property type="entry name" value="DNA-DIRECTED RNA POLYMERASE III"/>
    <property type="match status" value="1"/>
</dbReference>
<dbReference type="PANTHER" id="PTHR15367:SF4">
    <property type="entry name" value="DNA-DIRECTED RNA POLYMERASE III SUBUNIT RPC7-LIKE"/>
    <property type="match status" value="1"/>
</dbReference>
<dbReference type="Pfam" id="PF11705">
    <property type="entry name" value="RNA_pol_3_Rpc31"/>
    <property type="match status" value="1"/>
</dbReference>
<dbReference type="PIRSF" id="PIRSF000777">
    <property type="entry name" value="RNA_polIII_C31"/>
    <property type="match status" value="1"/>
</dbReference>
<reference key="1">
    <citation type="submission" date="2006-04" db="EMBL/GenBank/DDBJ databases">
        <authorList>
            <consortium name="NIH - Mammalian Gene Collection (MGC) project"/>
        </authorList>
    </citation>
    <scope>NUCLEOTIDE SEQUENCE [LARGE SCALE MRNA]</scope>
    <source>
        <strain>Hereford</strain>
        <tissue>Uterus</tissue>
    </source>
</reference>
<comment type="function">
    <text evidence="2">DNA-dependent RNA polymerase catalyzes the transcription of DNA into RNA using the four ribonucleoside triphosphates as substrates. Specific peripheric component of RNA polymerase III which synthesizes small RNAs, such as 5S rRNA and tRNAs.</text>
</comment>
<comment type="subunit">
    <text evidence="1 2">Component of the RNA polymerase III (Pol III) complex consisting of 17 subunits (By similarity). Pol III exists as two alternative complexes defined by the mutually exclusive incorporation of subunit POLR3G/RPC7alpha or POLR3GL/RPC7beta. Found in a trimeric complex with POLR3C/RPC3 and POLR3F/RPC6. Directly interacts with POLR3C (By similarity).</text>
</comment>
<comment type="subcellular location">
    <subcellularLocation>
        <location evidence="2">Nucleus</location>
    </subcellularLocation>
</comment>
<comment type="similarity">
    <text evidence="4">Belongs to the eukaryotic RPC7 RNA polymerase subunit family.</text>
</comment>
<keyword id="KW-0539">Nucleus</keyword>
<keyword id="KW-1185">Reference proteome</keyword>
<organism>
    <name type="scientific">Bos taurus</name>
    <name type="common">Bovine</name>
    <dbReference type="NCBI Taxonomy" id="9913"/>
    <lineage>
        <taxon>Eukaryota</taxon>
        <taxon>Metazoa</taxon>
        <taxon>Chordata</taxon>
        <taxon>Craniata</taxon>
        <taxon>Vertebrata</taxon>
        <taxon>Euteleostomi</taxon>
        <taxon>Mammalia</taxon>
        <taxon>Eutheria</taxon>
        <taxon>Laurasiatheria</taxon>
        <taxon>Artiodactyla</taxon>
        <taxon>Ruminantia</taxon>
        <taxon>Pecora</taxon>
        <taxon>Bovidae</taxon>
        <taxon>Bovinae</taxon>
        <taxon>Bos</taxon>
    </lineage>
</organism>
<accession>Q1RMR0</accession>
<name>RPC7L_BOVIN</name>
<evidence type="ECO:0000250" key="1"/>
<evidence type="ECO:0000250" key="2">
    <source>
        <dbReference type="UniProtKB" id="Q9BT43"/>
    </source>
</evidence>
<evidence type="ECO:0000256" key="3">
    <source>
        <dbReference type="SAM" id="MobiDB-lite"/>
    </source>
</evidence>
<evidence type="ECO:0000305" key="4"/>
<sequence>MASRGGGRGCGRGQLTFNVEAVGIGKGDALPPPTLQPSPLFPPLEFRPVPLPSGEEGEYVLALKQELRGAMRQLPYFIRPAVPKRDVERYSDKYQMSGPIDNAIDWNPDWRRLPRELKIRVRKLQKERTTIILPKRPPKTTEDKEETIQKLETLEKKEEEVTSEEDEEKEEEEEKEEEEEEEYDEEEHEEETDYIMSYFDNGEDFGGDSDDNMDEAIY</sequence>
<gene>
    <name type="primary">POLR3GL</name>
</gene>
<feature type="chain" id="PRO_0000311589" description="DNA-directed RNA polymerase III subunit RPC7-like">
    <location>
        <begin position="1"/>
        <end position="218"/>
    </location>
</feature>
<feature type="region of interest" description="Disordered" evidence="3">
    <location>
        <begin position="130"/>
        <end position="218"/>
    </location>
</feature>
<feature type="compositionally biased region" description="Basic and acidic residues" evidence="3">
    <location>
        <begin position="139"/>
        <end position="160"/>
    </location>
</feature>
<feature type="compositionally biased region" description="Acidic residues" evidence="3">
    <location>
        <begin position="161"/>
        <end position="193"/>
    </location>
</feature>
<feature type="compositionally biased region" description="Acidic residues" evidence="3">
    <location>
        <begin position="201"/>
        <end position="218"/>
    </location>
</feature>
<protein>
    <recommendedName>
        <fullName>DNA-directed RNA polymerase III subunit RPC7-like</fullName>
        <shortName>RNA polymerase III subunit C7-like</shortName>
    </recommendedName>
    <alternativeName>
        <fullName>DNA-directed RNA polymerase III subunit G-like</fullName>
    </alternativeName>
</protein>